<evidence type="ECO:0000255" key="1">
    <source>
        <dbReference type="HAMAP-Rule" id="MF_00385"/>
    </source>
</evidence>
<evidence type="ECO:0000305" key="2"/>
<proteinExistence type="inferred from homology"/>
<keyword id="KW-0687">Ribonucleoprotein</keyword>
<keyword id="KW-0689">Ribosomal protein</keyword>
<dbReference type="EMBL" id="CP001164">
    <property type="protein sequence ID" value="ACI34590.1"/>
    <property type="molecule type" value="Genomic_DNA"/>
</dbReference>
<dbReference type="RefSeq" id="WP_000256450.1">
    <property type="nucleotide sequence ID" value="NC_011353.1"/>
</dbReference>
<dbReference type="SMR" id="B5Z228"/>
<dbReference type="GeneID" id="93774459"/>
<dbReference type="KEGG" id="ecf:ECH74115_3848"/>
<dbReference type="HOGENOM" id="CLU_100590_5_1_6"/>
<dbReference type="GO" id="GO:0005737">
    <property type="term" value="C:cytoplasm"/>
    <property type="evidence" value="ECO:0007669"/>
    <property type="project" value="UniProtKB-ARBA"/>
</dbReference>
<dbReference type="GO" id="GO:0015935">
    <property type="term" value="C:small ribosomal subunit"/>
    <property type="evidence" value="ECO:0007669"/>
    <property type="project" value="TreeGrafter"/>
</dbReference>
<dbReference type="GO" id="GO:0003735">
    <property type="term" value="F:structural constituent of ribosome"/>
    <property type="evidence" value="ECO:0007669"/>
    <property type="project" value="InterPro"/>
</dbReference>
<dbReference type="GO" id="GO:0006412">
    <property type="term" value="P:translation"/>
    <property type="evidence" value="ECO:0007669"/>
    <property type="project" value="UniProtKB-UniRule"/>
</dbReference>
<dbReference type="FunFam" id="3.30.1320.10:FF:000001">
    <property type="entry name" value="30S ribosomal protein S16"/>
    <property type="match status" value="1"/>
</dbReference>
<dbReference type="Gene3D" id="3.30.1320.10">
    <property type="match status" value="1"/>
</dbReference>
<dbReference type="HAMAP" id="MF_00385">
    <property type="entry name" value="Ribosomal_bS16"/>
    <property type="match status" value="1"/>
</dbReference>
<dbReference type="InterPro" id="IPR000307">
    <property type="entry name" value="Ribosomal_bS16"/>
</dbReference>
<dbReference type="InterPro" id="IPR020592">
    <property type="entry name" value="Ribosomal_bS16_CS"/>
</dbReference>
<dbReference type="InterPro" id="IPR023803">
    <property type="entry name" value="Ribosomal_bS16_dom_sf"/>
</dbReference>
<dbReference type="NCBIfam" id="TIGR00002">
    <property type="entry name" value="S16"/>
    <property type="match status" value="1"/>
</dbReference>
<dbReference type="PANTHER" id="PTHR12919">
    <property type="entry name" value="30S RIBOSOMAL PROTEIN S16"/>
    <property type="match status" value="1"/>
</dbReference>
<dbReference type="PANTHER" id="PTHR12919:SF20">
    <property type="entry name" value="SMALL RIBOSOMAL SUBUNIT PROTEIN BS16M"/>
    <property type="match status" value="1"/>
</dbReference>
<dbReference type="Pfam" id="PF00886">
    <property type="entry name" value="Ribosomal_S16"/>
    <property type="match status" value="1"/>
</dbReference>
<dbReference type="SUPFAM" id="SSF54565">
    <property type="entry name" value="Ribosomal protein S16"/>
    <property type="match status" value="1"/>
</dbReference>
<dbReference type="PROSITE" id="PS00732">
    <property type="entry name" value="RIBOSOMAL_S16"/>
    <property type="match status" value="1"/>
</dbReference>
<name>RS16_ECO5E</name>
<sequence>MVTIRLARHGAKKRPFYQVVVADSRNARNGRFIERVGFFNPIASEKEEGTRLDLDRIAHWVGQGATISDRVAALIKEVNKAA</sequence>
<reference key="1">
    <citation type="journal article" date="2011" name="Proc. Natl. Acad. Sci. U.S.A.">
        <title>Genomic anatomy of Escherichia coli O157:H7 outbreaks.</title>
        <authorList>
            <person name="Eppinger M."/>
            <person name="Mammel M.K."/>
            <person name="Leclerc J.E."/>
            <person name="Ravel J."/>
            <person name="Cebula T.A."/>
        </authorList>
    </citation>
    <scope>NUCLEOTIDE SEQUENCE [LARGE SCALE GENOMIC DNA]</scope>
    <source>
        <strain>EC4115 / EHEC</strain>
    </source>
</reference>
<gene>
    <name evidence="1" type="primary">rpsP</name>
    <name type="ordered locus">ECH74115_3848</name>
</gene>
<feature type="chain" id="PRO_1000196400" description="Small ribosomal subunit protein bS16">
    <location>
        <begin position="1"/>
        <end position="82"/>
    </location>
</feature>
<protein>
    <recommendedName>
        <fullName evidence="1">Small ribosomal subunit protein bS16</fullName>
    </recommendedName>
    <alternativeName>
        <fullName evidence="2">30S ribosomal protein S16</fullName>
    </alternativeName>
</protein>
<organism>
    <name type="scientific">Escherichia coli O157:H7 (strain EC4115 / EHEC)</name>
    <dbReference type="NCBI Taxonomy" id="444450"/>
    <lineage>
        <taxon>Bacteria</taxon>
        <taxon>Pseudomonadati</taxon>
        <taxon>Pseudomonadota</taxon>
        <taxon>Gammaproteobacteria</taxon>
        <taxon>Enterobacterales</taxon>
        <taxon>Enterobacteriaceae</taxon>
        <taxon>Escherichia</taxon>
    </lineage>
</organism>
<accession>B5Z228</accession>
<comment type="similarity">
    <text evidence="1">Belongs to the bacterial ribosomal protein bS16 family.</text>
</comment>